<dbReference type="EMBL" id="CU928164">
    <property type="protein sequence ID" value="CAR18225.1"/>
    <property type="molecule type" value="Genomic_DNA"/>
</dbReference>
<dbReference type="RefSeq" id="WP_000092207.1">
    <property type="nucleotide sequence ID" value="NC_011750.1"/>
</dbReference>
<dbReference type="RefSeq" id="YP_002408061.1">
    <property type="nucleotide sequence ID" value="NC_011750.1"/>
</dbReference>
<dbReference type="SMR" id="B7NL69"/>
<dbReference type="STRING" id="585057.ECIAI39_2098"/>
<dbReference type="KEGG" id="ect:ECIAI39_2098"/>
<dbReference type="PATRIC" id="fig|585057.6.peg.2180"/>
<dbReference type="HOGENOM" id="CLU_001265_60_2_6"/>
<dbReference type="Proteomes" id="UP000000749">
    <property type="component" value="Chromosome"/>
</dbReference>
<dbReference type="GO" id="GO:0005886">
    <property type="term" value="C:plasma membrane"/>
    <property type="evidence" value="ECO:0007669"/>
    <property type="project" value="UniProtKB-SubCell"/>
</dbReference>
<dbReference type="GO" id="GO:0022857">
    <property type="term" value="F:transmembrane transporter activity"/>
    <property type="evidence" value="ECO:0007669"/>
    <property type="project" value="UniProtKB-UniRule"/>
</dbReference>
<dbReference type="GO" id="GO:0046677">
    <property type="term" value="P:response to antibiotic"/>
    <property type="evidence" value="ECO:0007669"/>
    <property type="project" value="UniProtKB-KW"/>
</dbReference>
<dbReference type="CDD" id="cd17329">
    <property type="entry name" value="MFS_MdtH_MDR_like"/>
    <property type="match status" value="1"/>
</dbReference>
<dbReference type="FunFam" id="1.20.1250.20:FF:000039">
    <property type="entry name" value="Multidrug resistance protein MdtH"/>
    <property type="match status" value="1"/>
</dbReference>
<dbReference type="Gene3D" id="1.20.1250.20">
    <property type="entry name" value="MFS general substrate transporter like domains"/>
    <property type="match status" value="1"/>
</dbReference>
<dbReference type="HAMAP" id="MF_01529">
    <property type="entry name" value="MFS_MdtH"/>
    <property type="match status" value="1"/>
</dbReference>
<dbReference type="InterPro" id="IPR011701">
    <property type="entry name" value="MFS"/>
</dbReference>
<dbReference type="InterPro" id="IPR020846">
    <property type="entry name" value="MFS_dom"/>
</dbReference>
<dbReference type="InterPro" id="IPR036259">
    <property type="entry name" value="MFS_trans_sf"/>
</dbReference>
<dbReference type="InterPro" id="IPR050171">
    <property type="entry name" value="MFS_Transporters"/>
</dbReference>
<dbReference type="InterPro" id="IPR022855">
    <property type="entry name" value="Multidrug-R_MdtH"/>
</dbReference>
<dbReference type="NCBIfam" id="NF008650">
    <property type="entry name" value="PRK11646.1"/>
    <property type="match status" value="1"/>
</dbReference>
<dbReference type="PANTHER" id="PTHR23517:SF2">
    <property type="entry name" value="MULTIDRUG RESISTANCE PROTEIN MDTH"/>
    <property type="match status" value="1"/>
</dbReference>
<dbReference type="PANTHER" id="PTHR23517">
    <property type="entry name" value="RESISTANCE PROTEIN MDTM, PUTATIVE-RELATED-RELATED"/>
    <property type="match status" value="1"/>
</dbReference>
<dbReference type="Pfam" id="PF07690">
    <property type="entry name" value="MFS_1"/>
    <property type="match status" value="1"/>
</dbReference>
<dbReference type="SUPFAM" id="SSF103473">
    <property type="entry name" value="MFS general substrate transporter"/>
    <property type="match status" value="1"/>
</dbReference>
<dbReference type="PROSITE" id="PS50850">
    <property type="entry name" value="MFS"/>
    <property type="match status" value="1"/>
</dbReference>
<protein>
    <recommendedName>
        <fullName evidence="1">Multidrug resistance protein MdtH</fullName>
    </recommendedName>
</protein>
<accession>B7NL69</accession>
<sequence length="402" mass="44393">MSRVSQARNLGKYFLLIDNMLVVLGFFVVFPLISIRFVDQMGWAAVMVGIALGLRQFIQQGLGIFGGAIADRFGAKPMIVTGMLMRAAGFATMGIAHEPWLLWFSCLLSGLGGTLFDPPRSALVVKLIRPQQRGRFFSLLMMQDSAGAVIGALLGSWLLQYDFRLVCATGAVLFVLCAAFNAWLLPAWKLSTVRTPVREGMTRVMRDKRFVTYVLTLAGYYMLAVQVMLMLPIMVNDVAGAPSAVKWMYAIEACLSLTLLYPIARWSEKHFRLEHRLMAGLLIMSLSMMPVGMVSGLQQLFTLICLFYIGSIIAEPARETLSASLADARARGSYMGFSRLGLAIGGAIGYIGGGWLFDLGKSAHQPELPWMMLGIIGIFTFLALGWQFSQKRTARRLLERDA</sequence>
<gene>
    <name evidence="1" type="primary">mdtH</name>
    <name type="ordered locus">ECIAI39_2098</name>
</gene>
<proteinExistence type="inferred from homology"/>
<feature type="chain" id="PRO_1000200800" description="Multidrug resistance protein MdtH">
    <location>
        <begin position="1"/>
        <end position="402"/>
    </location>
</feature>
<feature type="topological domain" description="Cytoplasmic" evidence="1">
    <location>
        <begin position="1"/>
        <end position="12"/>
    </location>
</feature>
<feature type="transmembrane region" description="Helical" evidence="1">
    <location>
        <begin position="13"/>
        <end position="33"/>
    </location>
</feature>
<feature type="topological domain" description="Periplasmic" evidence="1">
    <location>
        <begin position="34"/>
        <end position="98"/>
    </location>
</feature>
<feature type="transmembrane region" description="Helical" evidence="1">
    <location>
        <begin position="99"/>
        <end position="116"/>
    </location>
</feature>
<feature type="topological domain" description="Cytoplasmic" evidence="1">
    <location>
        <begin position="117"/>
        <end position="138"/>
    </location>
</feature>
<feature type="transmembrane region" description="Helical" evidence="1">
    <location>
        <begin position="139"/>
        <end position="159"/>
    </location>
</feature>
<feature type="topological domain" description="Periplasmic" evidence="1">
    <location>
        <begin position="160"/>
        <end position="164"/>
    </location>
</feature>
<feature type="transmembrane region" description="Helical" evidence="1">
    <location>
        <begin position="165"/>
        <end position="185"/>
    </location>
</feature>
<feature type="topological domain" description="Cytoplasmic" evidence="1">
    <location>
        <begin position="186"/>
        <end position="213"/>
    </location>
</feature>
<feature type="transmembrane region" description="Helical" evidence="1">
    <location>
        <begin position="214"/>
        <end position="234"/>
    </location>
</feature>
<feature type="topological domain" description="Periplasmic" evidence="1">
    <location>
        <begin position="235"/>
        <end position="243"/>
    </location>
</feature>
<feature type="transmembrane region" description="Helical" evidence="1">
    <location>
        <begin position="244"/>
        <end position="264"/>
    </location>
</feature>
<feature type="topological domain" description="Cytoplasmic" evidence="1">
    <location>
        <begin position="265"/>
        <end position="276"/>
    </location>
</feature>
<feature type="transmembrane region" description="Helical" evidence="1">
    <location>
        <begin position="277"/>
        <end position="297"/>
    </location>
</feature>
<feature type="topological domain" description="Periplasmic" evidence="1">
    <location>
        <begin position="298"/>
        <end position="299"/>
    </location>
</feature>
<feature type="transmembrane region" description="Helical" evidence="1">
    <location>
        <begin position="300"/>
        <end position="320"/>
    </location>
</feature>
<feature type="topological domain" description="Cytoplasmic" evidence="1">
    <location>
        <begin position="321"/>
        <end position="339"/>
    </location>
</feature>
<feature type="transmembrane region" description="Helical" evidence="1">
    <location>
        <begin position="340"/>
        <end position="360"/>
    </location>
</feature>
<feature type="topological domain" description="Periplasmic" evidence="1">
    <location>
        <begin position="361"/>
        <end position="367"/>
    </location>
</feature>
<feature type="transmembrane region" description="Helical" evidence="1">
    <location>
        <begin position="368"/>
        <end position="388"/>
    </location>
</feature>
<feature type="topological domain" description="Cytoplasmic" evidence="1">
    <location>
        <begin position="389"/>
        <end position="402"/>
    </location>
</feature>
<name>MDTH_ECO7I</name>
<evidence type="ECO:0000255" key="1">
    <source>
        <dbReference type="HAMAP-Rule" id="MF_01529"/>
    </source>
</evidence>
<reference key="1">
    <citation type="journal article" date="2009" name="PLoS Genet.">
        <title>Organised genome dynamics in the Escherichia coli species results in highly diverse adaptive paths.</title>
        <authorList>
            <person name="Touchon M."/>
            <person name="Hoede C."/>
            <person name="Tenaillon O."/>
            <person name="Barbe V."/>
            <person name="Baeriswyl S."/>
            <person name="Bidet P."/>
            <person name="Bingen E."/>
            <person name="Bonacorsi S."/>
            <person name="Bouchier C."/>
            <person name="Bouvet O."/>
            <person name="Calteau A."/>
            <person name="Chiapello H."/>
            <person name="Clermont O."/>
            <person name="Cruveiller S."/>
            <person name="Danchin A."/>
            <person name="Diard M."/>
            <person name="Dossat C."/>
            <person name="Karoui M.E."/>
            <person name="Frapy E."/>
            <person name="Garry L."/>
            <person name="Ghigo J.M."/>
            <person name="Gilles A.M."/>
            <person name="Johnson J."/>
            <person name="Le Bouguenec C."/>
            <person name="Lescat M."/>
            <person name="Mangenot S."/>
            <person name="Martinez-Jehanne V."/>
            <person name="Matic I."/>
            <person name="Nassif X."/>
            <person name="Oztas S."/>
            <person name="Petit M.A."/>
            <person name="Pichon C."/>
            <person name="Rouy Z."/>
            <person name="Ruf C.S."/>
            <person name="Schneider D."/>
            <person name="Tourret J."/>
            <person name="Vacherie B."/>
            <person name="Vallenet D."/>
            <person name="Medigue C."/>
            <person name="Rocha E.P.C."/>
            <person name="Denamur E."/>
        </authorList>
    </citation>
    <scope>NUCLEOTIDE SEQUENCE [LARGE SCALE GENOMIC DNA]</scope>
    <source>
        <strain>IAI39 / ExPEC</strain>
    </source>
</reference>
<comment type="function">
    <text evidence="1">Confers resistance to norfloxacin and enoxacin.</text>
</comment>
<comment type="subcellular location">
    <subcellularLocation>
        <location evidence="1">Cell inner membrane</location>
        <topology evidence="1">Multi-pass membrane protein</topology>
    </subcellularLocation>
</comment>
<comment type="similarity">
    <text evidence="1">Belongs to the major facilitator superfamily. DHA1 family. MdtH (TC 2.A.1.2.21) subfamily.</text>
</comment>
<keyword id="KW-0046">Antibiotic resistance</keyword>
<keyword id="KW-0997">Cell inner membrane</keyword>
<keyword id="KW-1003">Cell membrane</keyword>
<keyword id="KW-0472">Membrane</keyword>
<keyword id="KW-0812">Transmembrane</keyword>
<keyword id="KW-1133">Transmembrane helix</keyword>
<keyword id="KW-0813">Transport</keyword>
<organism>
    <name type="scientific">Escherichia coli O7:K1 (strain IAI39 / ExPEC)</name>
    <dbReference type="NCBI Taxonomy" id="585057"/>
    <lineage>
        <taxon>Bacteria</taxon>
        <taxon>Pseudomonadati</taxon>
        <taxon>Pseudomonadota</taxon>
        <taxon>Gammaproteobacteria</taxon>
        <taxon>Enterobacterales</taxon>
        <taxon>Enterobacteriaceae</taxon>
        <taxon>Escherichia</taxon>
    </lineage>
</organism>